<proteinExistence type="evidence at protein level"/>
<name>MYT1L_RAT</name>
<dbReference type="EMBL" id="U48809">
    <property type="protein sequence ID" value="AAC52728.1"/>
    <property type="status" value="ALT_FRAME"/>
    <property type="molecule type" value="mRNA"/>
</dbReference>
<dbReference type="EMBL" id="AABR07063792">
    <property type="status" value="NOT_ANNOTATED_CDS"/>
    <property type="molecule type" value="Genomic_DNA"/>
</dbReference>
<dbReference type="EMBL" id="AABR07063793">
    <property type="status" value="NOT_ANNOTATED_CDS"/>
    <property type="molecule type" value="Genomic_DNA"/>
</dbReference>
<dbReference type="EMBL" id="AABR07063794">
    <property type="status" value="NOT_ANNOTATED_CDS"/>
    <property type="molecule type" value="Genomic_DNA"/>
</dbReference>
<dbReference type="EMBL" id="AABR07063795">
    <property type="status" value="NOT_ANNOTATED_CDS"/>
    <property type="molecule type" value="Genomic_DNA"/>
</dbReference>
<dbReference type="EMBL" id="AABR07063796">
    <property type="status" value="NOT_ANNOTATED_CDS"/>
    <property type="molecule type" value="Genomic_DNA"/>
</dbReference>
<dbReference type="EMBL" id="AABR07063797">
    <property type="status" value="NOT_ANNOTATED_CDS"/>
    <property type="molecule type" value="Genomic_DNA"/>
</dbReference>
<dbReference type="EMBL" id="U67081">
    <property type="protein sequence ID" value="AAB40718.1"/>
    <property type="molecule type" value="mRNA"/>
</dbReference>
<dbReference type="PIR" id="T46637">
    <property type="entry name" value="T46637"/>
</dbReference>
<dbReference type="RefSeq" id="NP_446340.2">
    <molecule id="P70475-1"/>
    <property type="nucleotide sequence ID" value="NM_053888.2"/>
</dbReference>
<dbReference type="RefSeq" id="XP_063117534.1">
    <molecule id="P70475-1"/>
    <property type="nucleotide sequence ID" value="XM_063261464.1"/>
</dbReference>
<dbReference type="RefSeq" id="XP_063117535.1">
    <molecule id="P70475-1"/>
    <property type="nucleotide sequence ID" value="XM_063261465.1"/>
</dbReference>
<dbReference type="RefSeq" id="XP_063117536.1">
    <molecule id="P70475-1"/>
    <property type="nucleotide sequence ID" value="XM_063261466.1"/>
</dbReference>
<dbReference type="RefSeq" id="XP_063117537.1">
    <molecule id="P70475-1"/>
    <property type="nucleotide sequence ID" value="XM_063261467.1"/>
</dbReference>
<dbReference type="PDB" id="1PXE">
    <property type="method" value="NMR"/>
    <property type="chains" value="A=487-548"/>
</dbReference>
<dbReference type="PDBsum" id="1PXE"/>
<dbReference type="SMR" id="P70475"/>
<dbReference type="BioGRID" id="250552">
    <property type="interactions" value="1"/>
</dbReference>
<dbReference type="FunCoup" id="P70475">
    <property type="interactions" value="1574"/>
</dbReference>
<dbReference type="STRING" id="10116.ENSRNOP00000005905"/>
<dbReference type="GlyGen" id="P70475">
    <property type="glycosylation" value="5 sites"/>
</dbReference>
<dbReference type="iPTMnet" id="P70475"/>
<dbReference type="PhosphoSitePlus" id="P70475"/>
<dbReference type="PaxDb" id="10116-ENSRNOP00000005905"/>
<dbReference type="GeneID" id="116668"/>
<dbReference type="KEGG" id="rno:116668"/>
<dbReference type="AGR" id="RGD:620550"/>
<dbReference type="CTD" id="23040"/>
<dbReference type="RGD" id="620550">
    <property type="gene designation" value="Myt1l"/>
</dbReference>
<dbReference type="eggNOG" id="KOG3803">
    <property type="taxonomic scope" value="Eukaryota"/>
</dbReference>
<dbReference type="InParanoid" id="P70475"/>
<dbReference type="OrthoDB" id="10069059at2759"/>
<dbReference type="PhylomeDB" id="P70475"/>
<dbReference type="EvolutionaryTrace" id="P70475"/>
<dbReference type="PRO" id="PR:P70475"/>
<dbReference type="Proteomes" id="UP000002494">
    <property type="component" value="Unplaced"/>
</dbReference>
<dbReference type="GO" id="GO:0005694">
    <property type="term" value="C:chromosome"/>
    <property type="evidence" value="ECO:0007669"/>
    <property type="project" value="UniProtKB-SubCell"/>
</dbReference>
<dbReference type="GO" id="GO:0005634">
    <property type="term" value="C:nucleus"/>
    <property type="evidence" value="ECO:0000250"/>
    <property type="project" value="UniProtKB"/>
</dbReference>
<dbReference type="GO" id="GO:0050897">
    <property type="term" value="F:cobalt ion binding"/>
    <property type="evidence" value="ECO:0000315"/>
    <property type="project" value="CAFA"/>
</dbReference>
<dbReference type="GO" id="GO:0003677">
    <property type="term" value="F:DNA binding"/>
    <property type="evidence" value="ECO:0000314"/>
    <property type="project" value="DisProt"/>
</dbReference>
<dbReference type="GO" id="GO:0001228">
    <property type="term" value="F:DNA-binding transcription activator activity, RNA polymerase II-specific"/>
    <property type="evidence" value="ECO:0000314"/>
    <property type="project" value="NTNU_SB"/>
</dbReference>
<dbReference type="GO" id="GO:0003700">
    <property type="term" value="F:DNA-binding transcription factor activity"/>
    <property type="evidence" value="ECO:0000266"/>
    <property type="project" value="RGD"/>
</dbReference>
<dbReference type="GO" id="GO:0000981">
    <property type="term" value="F:DNA-binding transcription factor activity, RNA polymerase II-specific"/>
    <property type="evidence" value="ECO:0000318"/>
    <property type="project" value="GO_Central"/>
</dbReference>
<dbReference type="GO" id="GO:0001227">
    <property type="term" value="F:DNA-binding transcription repressor activity, RNA polymerase II-specific"/>
    <property type="evidence" value="ECO:0000250"/>
    <property type="project" value="UniProtKB"/>
</dbReference>
<dbReference type="GO" id="GO:0140487">
    <property type="term" value="F:metal ion sequestering activity"/>
    <property type="evidence" value="ECO:0000314"/>
    <property type="project" value="DisProt"/>
</dbReference>
<dbReference type="GO" id="GO:0044323">
    <property type="term" value="F:retinoic acid-responsive element binding"/>
    <property type="evidence" value="ECO:0000314"/>
    <property type="project" value="RGD"/>
</dbReference>
<dbReference type="GO" id="GO:0000978">
    <property type="term" value="F:RNA polymerase II cis-regulatory region sequence-specific DNA binding"/>
    <property type="evidence" value="ECO:0000318"/>
    <property type="project" value="GO_Central"/>
</dbReference>
<dbReference type="GO" id="GO:0000977">
    <property type="term" value="F:RNA polymerase II transcription regulatory region sequence-specific DNA binding"/>
    <property type="evidence" value="ECO:0000315"/>
    <property type="project" value="NTNU_SB"/>
</dbReference>
<dbReference type="GO" id="GO:0003713">
    <property type="term" value="F:transcription coactivator activity"/>
    <property type="evidence" value="ECO:0000314"/>
    <property type="project" value="RGD"/>
</dbReference>
<dbReference type="GO" id="GO:0008270">
    <property type="term" value="F:zinc ion binding"/>
    <property type="evidence" value="ECO:0000315"/>
    <property type="project" value="CAFA"/>
</dbReference>
<dbReference type="GO" id="GO:0000122">
    <property type="term" value="P:negative regulation of transcription by RNA polymerase II"/>
    <property type="evidence" value="ECO:0000266"/>
    <property type="project" value="RGD"/>
</dbReference>
<dbReference type="GO" id="GO:0007399">
    <property type="term" value="P:nervous system development"/>
    <property type="evidence" value="ECO:0000250"/>
    <property type="project" value="UniProtKB"/>
</dbReference>
<dbReference type="GO" id="GO:0048666">
    <property type="term" value="P:neuron development"/>
    <property type="evidence" value="ECO:0000250"/>
    <property type="project" value="UniProtKB"/>
</dbReference>
<dbReference type="GO" id="GO:0030182">
    <property type="term" value="P:neuron differentiation"/>
    <property type="evidence" value="ECO:0000250"/>
    <property type="project" value="UniProtKB"/>
</dbReference>
<dbReference type="GO" id="GO:0048663">
    <property type="term" value="P:neuron fate commitment"/>
    <property type="evidence" value="ECO:0000250"/>
    <property type="project" value="UniProtKB"/>
</dbReference>
<dbReference type="GO" id="GO:0048665">
    <property type="term" value="P:neuron fate specification"/>
    <property type="evidence" value="ECO:0000250"/>
    <property type="project" value="UniProtKB"/>
</dbReference>
<dbReference type="GO" id="GO:0045944">
    <property type="term" value="P:positive regulation of transcription by RNA polymerase II"/>
    <property type="evidence" value="ECO:0000314"/>
    <property type="project" value="NTNU_SB"/>
</dbReference>
<dbReference type="GO" id="GO:0006357">
    <property type="term" value="P:regulation of transcription by RNA polymerase II"/>
    <property type="evidence" value="ECO:0000266"/>
    <property type="project" value="RGD"/>
</dbReference>
<dbReference type="FunFam" id="4.10.320.30:FF:000001">
    <property type="entry name" value="Myelin transcription factor 1-like, a"/>
    <property type="match status" value="6"/>
</dbReference>
<dbReference type="Gene3D" id="4.10.320.30">
    <property type="match status" value="6"/>
</dbReference>
<dbReference type="InterPro" id="IPR013681">
    <property type="entry name" value="Myelin_TF"/>
</dbReference>
<dbReference type="InterPro" id="IPR002515">
    <property type="entry name" value="Znf_C2H2C"/>
</dbReference>
<dbReference type="InterPro" id="IPR036060">
    <property type="entry name" value="Znf_C2H2C_sf"/>
</dbReference>
<dbReference type="PANTHER" id="PTHR10816:SF15">
    <property type="entry name" value="MYELIN TRANSCRIPTION FACTOR 1-LIKE PROTEIN"/>
    <property type="match status" value="1"/>
</dbReference>
<dbReference type="PANTHER" id="PTHR10816">
    <property type="entry name" value="MYELIN TRANSCRIPTION FACTOR 1-RELATED"/>
    <property type="match status" value="1"/>
</dbReference>
<dbReference type="Pfam" id="PF08474">
    <property type="entry name" value="MYT1"/>
    <property type="match status" value="1"/>
</dbReference>
<dbReference type="Pfam" id="PF01530">
    <property type="entry name" value="zf-C2HC"/>
    <property type="match status" value="6"/>
</dbReference>
<dbReference type="SUPFAM" id="SSF103637">
    <property type="entry name" value="CCHHC domain"/>
    <property type="match status" value="6"/>
</dbReference>
<dbReference type="PROSITE" id="PS51802">
    <property type="entry name" value="ZF_CCHHC"/>
    <property type="match status" value="6"/>
</dbReference>
<comment type="function">
    <text evidence="1 6">Transcription factor that plays a key role in neuronal differentiation (PubMed:9373037). Acts by specifically repressing expression of non-neuronal genes during neuron differentiation (By similarity). In contrast to other transcription repressors that inhibit specific lineages, mediates repression of multiple differentiation programs (By similarity). Also represses expression of negative regulators of neurogenesis, such as members of the Notch signaling pathway, including HES1 (By similarity). The combination of three transcription factors, ASCL1, POU3F2/BRN2 and MYT1L, is sufficient to reprogram fibroblasts and other somatic cells into induced neuronal (iN) cells in vitro (By similarity). Directly binds the 5'-AAGTT-3' core motif present on the promoter of target genes and represses transcription by recruiting a multiprotein complex containing SIN3B (By similarity). The 5'-AAGTT-3' core motif is absent from the promoter of neural genes (By similarity).</text>
</comment>
<comment type="subunit">
    <text evidence="1">Interacts with SIN3B.</text>
</comment>
<comment type="subcellular location">
    <subcellularLocation>
        <location evidence="6">Nucleus</location>
    </subcellularLocation>
    <subcellularLocation>
        <location evidence="1">Chromosome</location>
    </subcellularLocation>
    <text evidence="1">Preferentially binds to DNA binding sites that are in an open chromatin configuration.</text>
</comment>
<comment type="alternative products">
    <event type="alternative splicing"/>
    <isoform>
        <id>P70475-1</id>
        <name>1</name>
        <sequence type="displayed"/>
    </isoform>
    <isoform>
        <id>P70475-2</id>
        <name>2</name>
        <sequence type="not described"/>
    </isoform>
    <isoform>
        <id>P70475-3</id>
        <name>3</name>
        <sequence type="not described"/>
    </isoform>
</comment>
<comment type="tissue specificity">
    <text evidence="5 6">Brain, testis and pituitary gland. Expression is higher in the brain than in the testis and pituitary gland. Highest level expression seen in the developing CNS.</text>
</comment>
<comment type="developmental stage">
    <text evidence="5 6">Detected at 11.5 dpc and expression is seen throughout the proliferating cortex neuroepithelium, developing medulla, and spinal cord. At 12.5 dpc found in the nasal epithelium and at 13.5 dpc detected in the trigeminal ganglia, dorsal root ganglia and the ganglion cell layer of the retina. At 14 dpc to 15 dpc, expressed at high levels in the brain and spinal cord and then levels subsequently decrease.</text>
</comment>
<comment type="similarity">
    <text evidence="8">Belongs to the MYT1 family.</text>
</comment>
<comment type="sequence caution" evidence="8">
    <conflict type="erroneous gene model prediction">
        <sequence resource="EMBL" id="AABR07063792"/>
    </conflict>
</comment>
<comment type="sequence caution" evidence="8">
    <conflict type="erroneous gene model prediction">
        <sequence resource="EMBL" id="AABR07063793"/>
    </conflict>
</comment>
<comment type="sequence caution" evidence="8">
    <conflict type="erroneous gene model prediction">
        <sequence resource="EMBL" id="AABR07063794"/>
    </conflict>
</comment>
<comment type="sequence caution" evidence="8">
    <conflict type="erroneous gene model prediction">
        <sequence resource="EMBL" id="AABR07063795"/>
    </conflict>
</comment>
<comment type="sequence caution" evidence="8">
    <conflict type="erroneous gene model prediction">
        <sequence resource="EMBL" id="AABR07063796"/>
    </conflict>
</comment>
<comment type="sequence caution" evidence="8">
    <conflict type="erroneous gene model prediction">
        <sequence resource="EMBL" id="AABR07063797"/>
    </conflict>
</comment>
<comment type="sequence caution" evidence="8">
    <conflict type="frameshift">
        <sequence resource="EMBL-CDS" id="AAC52728"/>
    </conflict>
</comment>
<reference key="1">
    <citation type="journal article" date="1996" name="J. Biol. Chem.">
        <title>A novel family of Cys-Cys, His-Cys zinc finger transcription factors expressed in developing nervous system and pituitary gland.</title>
        <authorList>
            <person name="Jiang Y."/>
            <person name="Yu V.C."/>
            <person name="Buchholz F."/>
            <person name="O'Connell S."/>
            <person name="Rhodes S.J."/>
            <person name="Candeloro C."/>
            <person name="Xia Y.-R."/>
            <person name="Lusis A.J."/>
            <person name="Rosenfeld M.G."/>
        </authorList>
    </citation>
    <scope>NUCLEOTIDE SEQUENCE [MRNA]</scope>
    <scope>ALTERNATIVE SPLICING</scope>
    <scope>TISSUE SPECIFICITY</scope>
    <scope>DEVELOPMENTAL STAGE</scope>
</reference>
<reference key="2">
    <citation type="journal article" date="2004" name="Nature">
        <title>Genome sequence of the Brown Norway rat yields insights into mammalian evolution.</title>
        <authorList>
            <person name="Gibbs R.A."/>
            <person name="Weinstock G.M."/>
            <person name="Metzker M.L."/>
            <person name="Muzny D.M."/>
            <person name="Sodergren E.J."/>
            <person name="Scherer S."/>
            <person name="Scott G."/>
            <person name="Steffen D."/>
            <person name="Worley K.C."/>
            <person name="Burch P.E."/>
            <person name="Okwuonu G."/>
            <person name="Hines S."/>
            <person name="Lewis L."/>
            <person name="Deramo C."/>
            <person name="Delgado O."/>
            <person name="Dugan-Rocha S."/>
            <person name="Miner G."/>
            <person name="Morgan M."/>
            <person name="Hawes A."/>
            <person name="Gill R."/>
            <person name="Holt R.A."/>
            <person name="Adams M.D."/>
            <person name="Amanatides P.G."/>
            <person name="Baden-Tillson H."/>
            <person name="Barnstead M."/>
            <person name="Chin S."/>
            <person name="Evans C.A."/>
            <person name="Ferriera S."/>
            <person name="Fosler C."/>
            <person name="Glodek A."/>
            <person name="Gu Z."/>
            <person name="Jennings D."/>
            <person name="Kraft C.L."/>
            <person name="Nguyen T."/>
            <person name="Pfannkoch C.M."/>
            <person name="Sitter C."/>
            <person name="Sutton G.G."/>
            <person name="Venter J.C."/>
            <person name="Woodage T."/>
            <person name="Smith D."/>
            <person name="Lee H.-M."/>
            <person name="Gustafson E."/>
            <person name="Cahill P."/>
            <person name="Kana A."/>
            <person name="Doucette-Stamm L."/>
            <person name="Weinstock K."/>
            <person name="Fechtel K."/>
            <person name="Weiss R.B."/>
            <person name="Dunn D.M."/>
            <person name="Green E.D."/>
            <person name="Blakesley R.W."/>
            <person name="Bouffard G.G."/>
            <person name="De Jong P.J."/>
            <person name="Osoegawa K."/>
            <person name="Zhu B."/>
            <person name="Marra M."/>
            <person name="Schein J."/>
            <person name="Bosdet I."/>
            <person name="Fjell C."/>
            <person name="Jones S."/>
            <person name="Krzywinski M."/>
            <person name="Mathewson C."/>
            <person name="Siddiqui A."/>
            <person name="Wye N."/>
            <person name="McPherson J."/>
            <person name="Zhao S."/>
            <person name="Fraser C.M."/>
            <person name="Shetty J."/>
            <person name="Shatsman S."/>
            <person name="Geer K."/>
            <person name="Chen Y."/>
            <person name="Abramzon S."/>
            <person name="Nierman W.C."/>
            <person name="Havlak P.H."/>
            <person name="Chen R."/>
            <person name="Durbin K.J."/>
            <person name="Egan A."/>
            <person name="Ren Y."/>
            <person name="Song X.-Z."/>
            <person name="Li B."/>
            <person name="Liu Y."/>
            <person name="Qin X."/>
            <person name="Cawley S."/>
            <person name="Cooney A.J."/>
            <person name="D'Souza L.M."/>
            <person name="Martin K."/>
            <person name="Wu J.Q."/>
            <person name="Gonzalez-Garay M.L."/>
            <person name="Jackson A.R."/>
            <person name="Kalafus K.J."/>
            <person name="McLeod M.P."/>
            <person name="Milosavljevic A."/>
            <person name="Virk D."/>
            <person name="Volkov A."/>
            <person name="Wheeler D.A."/>
            <person name="Zhang Z."/>
            <person name="Bailey J.A."/>
            <person name="Eichler E.E."/>
            <person name="Tuzun E."/>
            <person name="Birney E."/>
            <person name="Mongin E."/>
            <person name="Ureta-Vidal A."/>
            <person name="Woodwark C."/>
            <person name="Zdobnov E."/>
            <person name="Bork P."/>
            <person name="Suyama M."/>
            <person name="Torrents D."/>
            <person name="Alexandersson M."/>
            <person name="Trask B.J."/>
            <person name="Young J.M."/>
            <person name="Huang H."/>
            <person name="Wang H."/>
            <person name="Xing H."/>
            <person name="Daniels S."/>
            <person name="Gietzen D."/>
            <person name="Schmidt J."/>
            <person name="Stevens K."/>
            <person name="Vitt U."/>
            <person name="Wingrove J."/>
            <person name="Camara F."/>
            <person name="Mar Alba M."/>
            <person name="Abril J.F."/>
            <person name="Guigo R."/>
            <person name="Smit A."/>
            <person name="Dubchak I."/>
            <person name="Rubin E.M."/>
            <person name="Couronne O."/>
            <person name="Poliakov A."/>
            <person name="Huebner N."/>
            <person name="Ganten D."/>
            <person name="Goesele C."/>
            <person name="Hummel O."/>
            <person name="Kreitler T."/>
            <person name="Lee Y.-A."/>
            <person name="Monti J."/>
            <person name="Schulz H."/>
            <person name="Zimdahl H."/>
            <person name="Himmelbauer H."/>
            <person name="Lehrach H."/>
            <person name="Jacob H.J."/>
            <person name="Bromberg S."/>
            <person name="Gullings-Handley J."/>
            <person name="Jensen-Seaman M.I."/>
            <person name="Kwitek A.E."/>
            <person name="Lazar J."/>
            <person name="Pasko D."/>
            <person name="Tonellato P.J."/>
            <person name="Twigger S."/>
            <person name="Ponting C.P."/>
            <person name="Duarte J.M."/>
            <person name="Rice S."/>
            <person name="Goodstadt L."/>
            <person name="Beatson S.A."/>
            <person name="Emes R.D."/>
            <person name="Winter E.E."/>
            <person name="Webber C."/>
            <person name="Brandt P."/>
            <person name="Nyakatura G."/>
            <person name="Adetobi M."/>
            <person name="Chiaromonte F."/>
            <person name="Elnitski L."/>
            <person name="Eswara P."/>
            <person name="Hardison R.C."/>
            <person name="Hou M."/>
            <person name="Kolbe D."/>
            <person name="Makova K."/>
            <person name="Miller W."/>
            <person name="Nekrutenko A."/>
            <person name="Riemer C."/>
            <person name="Schwartz S."/>
            <person name="Taylor J."/>
            <person name="Yang S."/>
            <person name="Zhang Y."/>
            <person name="Lindpaintner K."/>
            <person name="Andrews T.D."/>
            <person name="Caccamo M."/>
            <person name="Clamp M."/>
            <person name="Clarke L."/>
            <person name="Curwen V."/>
            <person name="Durbin R.M."/>
            <person name="Eyras E."/>
            <person name="Searle S.M."/>
            <person name="Cooper G.M."/>
            <person name="Batzoglou S."/>
            <person name="Brudno M."/>
            <person name="Sidow A."/>
            <person name="Stone E.A."/>
            <person name="Payseur B.A."/>
            <person name="Bourque G."/>
            <person name="Lopez-Otin C."/>
            <person name="Puente X.S."/>
            <person name="Chakrabarti K."/>
            <person name="Chatterji S."/>
            <person name="Dewey C."/>
            <person name="Pachter L."/>
            <person name="Bray N."/>
            <person name="Yap V.B."/>
            <person name="Caspi A."/>
            <person name="Tesler G."/>
            <person name="Pevzner P.A."/>
            <person name="Haussler D."/>
            <person name="Roskin K.M."/>
            <person name="Baertsch R."/>
            <person name="Clawson H."/>
            <person name="Furey T.S."/>
            <person name="Hinrichs A.S."/>
            <person name="Karolchik D."/>
            <person name="Kent W.J."/>
            <person name="Rosenbloom K.R."/>
            <person name="Trumbower H."/>
            <person name="Weirauch M."/>
            <person name="Cooper D.N."/>
            <person name="Stenson P.D."/>
            <person name="Ma B."/>
            <person name="Brent M."/>
            <person name="Arumugam M."/>
            <person name="Shteynberg D."/>
            <person name="Copley R.R."/>
            <person name="Taylor M.S."/>
            <person name="Riethman H."/>
            <person name="Mudunuri U."/>
            <person name="Peterson J."/>
            <person name="Guyer M."/>
            <person name="Felsenfeld A."/>
            <person name="Old S."/>
            <person name="Mockrin S."/>
            <person name="Collins F.S."/>
        </authorList>
    </citation>
    <scope>NUCLEOTIDE SEQUENCE [LARGE SCALE GENOMIC DNA]</scope>
    <source>
        <strain>Brown Norway</strain>
    </source>
</reference>
<reference key="3">
    <citation type="journal article" date="1996" name="Cell">
        <title>X-MyT1, a Xenopus C2HC-type zinc finger protein with a regulatory function in neuronal differentiation.</title>
        <authorList>
            <person name="Bellefroid E.J."/>
            <person name="Bourguignon C."/>
            <person name="Hollemann T."/>
            <person name="Ma Q."/>
            <person name="Anderson D.J."/>
            <person name="Kintner C."/>
            <person name="Pieler T."/>
        </authorList>
    </citation>
    <scope>NUCLEOTIDE SEQUENCE [MRNA] OF 371-1187</scope>
</reference>
<reference key="4">
    <citation type="journal article" date="1997" name="J. Neurosci. Res.">
        <title>Myelin transcription factor 1 (Myt1) of the oligodendrocyte lineage, along with a closely related CCHC zinc finger, is expressed in developing neurons in the mammalian central nervous system.</title>
        <authorList>
            <person name="Kim J.G."/>
            <person name="Armstrong R.C."/>
            <person name="Agoston D.V."/>
            <person name="Robinsky A."/>
            <person name="Wiese C."/>
            <person name="Nagle J."/>
            <person name="Hudson L.D."/>
        </authorList>
    </citation>
    <scope>FUNCTION</scope>
    <scope>SUBCELLULAR LOCATION</scope>
    <scope>TISSUE SPECIFICITY</scope>
    <scope>DEVELOPMENTAL STAGE</scope>
</reference>
<reference key="5">
    <citation type="journal article" date="2004" name="Biochemistry">
        <title>Solution structure of a CCHHC domain of neural zinc finger factor-1 and its implications for DNA binding.</title>
        <authorList>
            <person name="Berkovits-Cymet H.J."/>
            <person name="Amann B.T."/>
            <person name="Berg J.M."/>
        </authorList>
    </citation>
    <scope>STRUCTURE BY NMR OF 487-548</scope>
</reference>
<organism>
    <name type="scientific">Rattus norvegicus</name>
    <name type="common">Rat</name>
    <dbReference type="NCBI Taxonomy" id="10116"/>
    <lineage>
        <taxon>Eukaryota</taxon>
        <taxon>Metazoa</taxon>
        <taxon>Chordata</taxon>
        <taxon>Craniata</taxon>
        <taxon>Vertebrata</taxon>
        <taxon>Euteleostomi</taxon>
        <taxon>Mammalia</taxon>
        <taxon>Eutheria</taxon>
        <taxon>Euarchontoglires</taxon>
        <taxon>Glires</taxon>
        <taxon>Rodentia</taxon>
        <taxon>Myomorpha</taxon>
        <taxon>Muroidea</taxon>
        <taxon>Muridae</taxon>
        <taxon>Murinae</taxon>
        <taxon>Rattus</taxon>
    </lineage>
</organism>
<sequence length="1187" mass="132926">MDVDAEEKRHRTRSKGVRVPVEPAIQELFSCPTPGCDGSGHVSGKYARHRSVYGCPLAKKRKTQDKQPQEPAPKRKPFAVKADSSSVDECYESDGTEDMDDKEEDDDEEFSEDNDEQGDDDDEDEVDREDEEEIEEEDDEDDEDDDDGDDVEEEEDDDDEEEEEEEEEEENEDHQMSCTRIMQDPEKDDNNNDEYDNYDELVAKSLLNLGKIAEDAAYRARTESEMNSNTSNSLEDDSDKNENLGRKSELSLDLDSDVVRETVDSLKLLAQGHGVVLSENISDRSYAEGMSQQDSRNMNYVMLGKPMNNGLMEKMVEESDEEVCLSSLECLRNQCFDLARKLSETNPQDRSQPPNMSVRQHVRQEDDFPGRTPDRSYSDMMNLMRLEEQLSPRSRTFSSCAKEDGCHERDDDTTSVNSDRSEEVFDMTKGNLTLLEKAIALETERAKAMREKMAMDAGRRDNLRSYEDQSPRQLAGEDRKSKSSDSHVKKPYYDPSRTEKRESKCPTPGCDGTGHVTGLYPHHRSLSGCPHKDRVPPEILAMHENVLKCPTPGCTGRGHVNSNRNSHRSLSGCPIAAAEKLAKAQEKHQSCDVSKSNQASDRVLRPMCFVKQLEIPQYGYRNNVPTTTPRSNLAKELEKYSKTSFEYNSYDNHTYGKRAIAPKVQTRDISPKGYDDAKRYCKNASPSSSTTSSYAPSSSSNLSCGGGSSASSTCSKSSFDYTHDMEAAHMAATAILNLSTRCREMPQNLSTKPQDLCTARNPDMEVDENGTLDLSMNKQRPRDSCCPVLTPLEPMSPQQQAVMSSRCFQLSEGDCWDLPVDYTKMKPRRVDEEDPKEITPEDLDPFQEALEERRYPGEVTIPSPKPKYPQCKESKKDLITLSGCPLADKSIRSMLATSSQELKCPTPGCDGSGHITGNYASHRSLSGCPRAKKSGIRIAQSKEDKEDQEPIRCPVPGCDGQGHITGKYASHRSASGCPLAAKRQKDGYLNGSQFSWKSVKTEGMSCPTPGCDGSGHVSGSFLTHRSLSGCPRATSAMKKAKLSGEQMLTIKQRASNGIENDEEIKQLDEEIKELNESNSQMEADMIKLRTQVTITTMESNLKTIEEENKVIEQQNESLLHELANLSQSLIHSLANIQLPHMDPINEQNFDAYVTTLTEMYTNQDRYQSPENKALLENIKQAVRGIQV</sequence>
<accession>P70475</accession>
<accession>D4A9W2</accession>
<accession>P70589</accession>
<feature type="chain" id="PRO_0000096675" description="Myelin transcription factor 1-like protein">
    <location>
        <begin position="1"/>
        <end position="1187"/>
    </location>
</feature>
<feature type="zinc finger region" description="CCHHC-type 1" evidence="3">
    <location>
        <begin position="22"/>
        <end position="65"/>
    </location>
</feature>
<feature type="zinc finger region" description="CCHHC-type 2" evidence="3">
    <location>
        <begin position="496"/>
        <end position="539"/>
    </location>
</feature>
<feature type="zinc finger region" description="CCHHC-type 3" evidence="3">
    <location>
        <begin position="540"/>
        <end position="583"/>
    </location>
</feature>
<feature type="zinc finger region" description="CCHHC-type 4" evidence="3">
    <location>
        <begin position="895"/>
        <end position="938"/>
    </location>
</feature>
<feature type="zinc finger region" description="CCHHC-type 5" evidence="3">
    <location>
        <begin position="944"/>
        <end position="987"/>
    </location>
</feature>
<feature type="zinc finger region" description="CCHHC-type 6" evidence="3">
    <location>
        <begin position="997"/>
        <end position="1040"/>
    </location>
</feature>
<feature type="region of interest" description="Disordered" evidence="4">
    <location>
        <begin position="1"/>
        <end position="20"/>
    </location>
</feature>
<feature type="region of interest" description="Disordered" evidence="4">
    <location>
        <begin position="56"/>
        <end position="178"/>
    </location>
</feature>
<feature type="region of interest" description="Disordered" evidence="4">
    <location>
        <begin position="221"/>
        <end position="248"/>
    </location>
</feature>
<feature type="region of interest" description="Disordered" evidence="4">
    <location>
        <begin position="343"/>
        <end position="422"/>
    </location>
</feature>
<feature type="region of interest" description="Disordered" evidence="4">
    <location>
        <begin position="450"/>
        <end position="509"/>
    </location>
</feature>
<feature type="region of interest" description="Disordered" evidence="4">
    <location>
        <begin position="684"/>
        <end position="708"/>
    </location>
</feature>
<feature type="coiled-coil region" evidence="2">
    <location>
        <begin position="1055"/>
        <end position="1131"/>
    </location>
</feature>
<feature type="compositionally biased region" description="Acidic residues" evidence="4">
    <location>
        <begin position="89"/>
        <end position="172"/>
    </location>
</feature>
<feature type="compositionally biased region" description="Polar residues" evidence="4">
    <location>
        <begin position="344"/>
        <end position="358"/>
    </location>
</feature>
<feature type="compositionally biased region" description="Basic and acidic residues" evidence="4">
    <location>
        <begin position="362"/>
        <end position="377"/>
    </location>
</feature>
<feature type="compositionally biased region" description="Basic and acidic residues" evidence="4">
    <location>
        <begin position="401"/>
        <end position="412"/>
    </location>
</feature>
<feature type="compositionally biased region" description="Basic and acidic residues" evidence="4">
    <location>
        <begin position="450"/>
        <end position="504"/>
    </location>
</feature>
<feature type="binding site" evidence="3">
    <location>
        <position position="31"/>
    </location>
    <ligand>
        <name>Zn(2+)</name>
        <dbReference type="ChEBI" id="CHEBI:29105"/>
        <label>1</label>
    </ligand>
</feature>
<feature type="binding site" evidence="3">
    <location>
        <position position="36"/>
    </location>
    <ligand>
        <name>Zn(2+)</name>
        <dbReference type="ChEBI" id="CHEBI:29105"/>
        <label>1</label>
    </ligand>
</feature>
<feature type="binding site" evidence="3">
    <location>
        <position position="49"/>
    </location>
    <ligand>
        <name>Zn(2+)</name>
        <dbReference type="ChEBI" id="CHEBI:29105"/>
        <label>1</label>
    </ligand>
</feature>
<feature type="binding site" evidence="3">
    <location>
        <position position="55"/>
    </location>
    <ligand>
        <name>Zn(2+)</name>
        <dbReference type="ChEBI" id="CHEBI:29105"/>
        <label>1</label>
    </ligand>
</feature>
<feature type="binding site" evidence="3">
    <location>
        <position position="505"/>
    </location>
    <ligand>
        <name>Zn(2+)</name>
        <dbReference type="ChEBI" id="CHEBI:29105"/>
        <label>2</label>
    </ligand>
</feature>
<feature type="binding site" evidence="3">
    <location>
        <position position="510"/>
    </location>
    <ligand>
        <name>Zn(2+)</name>
        <dbReference type="ChEBI" id="CHEBI:29105"/>
        <label>2</label>
    </ligand>
</feature>
<feature type="binding site" evidence="3">
    <location>
        <position position="523"/>
    </location>
    <ligand>
        <name>Zn(2+)</name>
        <dbReference type="ChEBI" id="CHEBI:29105"/>
        <label>2</label>
    </ligand>
</feature>
<feature type="binding site" evidence="3">
    <location>
        <position position="529"/>
    </location>
    <ligand>
        <name>Zn(2+)</name>
        <dbReference type="ChEBI" id="CHEBI:29105"/>
        <label>2</label>
    </ligand>
</feature>
<feature type="binding site" evidence="3">
    <location>
        <position position="549"/>
    </location>
    <ligand>
        <name>Zn(2+)</name>
        <dbReference type="ChEBI" id="CHEBI:29105"/>
        <label>3</label>
    </ligand>
</feature>
<feature type="binding site" evidence="3">
    <location>
        <position position="554"/>
    </location>
    <ligand>
        <name>Zn(2+)</name>
        <dbReference type="ChEBI" id="CHEBI:29105"/>
        <label>3</label>
    </ligand>
</feature>
<feature type="binding site" evidence="3">
    <location>
        <position position="567"/>
    </location>
    <ligand>
        <name>Zn(2+)</name>
        <dbReference type="ChEBI" id="CHEBI:29105"/>
        <label>3</label>
    </ligand>
</feature>
<feature type="binding site" evidence="3">
    <location>
        <position position="573"/>
    </location>
    <ligand>
        <name>Zn(2+)</name>
        <dbReference type="ChEBI" id="CHEBI:29105"/>
        <label>3</label>
    </ligand>
</feature>
<feature type="binding site" evidence="3">
    <location>
        <position position="904"/>
    </location>
    <ligand>
        <name>Zn(2+)</name>
        <dbReference type="ChEBI" id="CHEBI:29105"/>
        <label>4</label>
    </ligand>
</feature>
<feature type="binding site" evidence="3">
    <location>
        <position position="909"/>
    </location>
    <ligand>
        <name>Zn(2+)</name>
        <dbReference type="ChEBI" id="CHEBI:29105"/>
        <label>4</label>
    </ligand>
</feature>
<feature type="binding site" evidence="3">
    <location>
        <position position="922"/>
    </location>
    <ligand>
        <name>Zn(2+)</name>
        <dbReference type="ChEBI" id="CHEBI:29105"/>
        <label>4</label>
    </ligand>
</feature>
<feature type="binding site" evidence="3">
    <location>
        <position position="928"/>
    </location>
    <ligand>
        <name>Zn(2+)</name>
        <dbReference type="ChEBI" id="CHEBI:29105"/>
        <label>4</label>
    </ligand>
</feature>
<feature type="binding site" evidence="3">
    <location>
        <position position="953"/>
    </location>
    <ligand>
        <name>Zn(2+)</name>
        <dbReference type="ChEBI" id="CHEBI:29105"/>
        <label>5</label>
    </ligand>
</feature>
<feature type="binding site" evidence="3">
    <location>
        <position position="958"/>
    </location>
    <ligand>
        <name>Zn(2+)</name>
        <dbReference type="ChEBI" id="CHEBI:29105"/>
        <label>5</label>
    </ligand>
</feature>
<feature type="binding site" evidence="3">
    <location>
        <position position="971"/>
    </location>
    <ligand>
        <name>Zn(2+)</name>
        <dbReference type="ChEBI" id="CHEBI:29105"/>
        <label>5</label>
    </ligand>
</feature>
<feature type="binding site" evidence="3">
    <location>
        <position position="977"/>
    </location>
    <ligand>
        <name>Zn(2+)</name>
        <dbReference type="ChEBI" id="CHEBI:29105"/>
        <label>5</label>
    </ligand>
</feature>
<feature type="binding site" evidence="3">
    <location>
        <position position="1006"/>
    </location>
    <ligand>
        <name>Zn(2+)</name>
        <dbReference type="ChEBI" id="CHEBI:29105"/>
        <label>6</label>
    </ligand>
</feature>
<feature type="binding site" evidence="3">
    <location>
        <position position="1011"/>
    </location>
    <ligand>
        <name>Zn(2+)</name>
        <dbReference type="ChEBI" id="CHEBI:29105"/>
        <label>6</label>
    </ligand>
</feature>
<feature type="binding site" evidence="3">
    <location>
        <position position="1024"/>
    </location>
    <ligand>
        <name>Zn(2+)</name>
        <dbReference type="ChEBI" id="CHEBI:29105"/>
        <label>6</label>
    </ligand>
</feature>
<feature type="binding site" evidence="3">
    <location>
        <position position="1030"/>
    </location>
    <ligand>
        <name>Zn(2+)</name>
        <dbReference type="ChEBI" id="CHEBI:29105"/>
        <label>6</label>
    </ligand>
</feature>
<feature type="modified residue" description="Phosphoserine" evidence="1">
    <location>
        <position position="251"/>
    </location>
</feature>
<feature type="sequence conflict" description="In Ref. 1; AAC52728." evidence="8" ref="1">
    <original>S</original>
    <variation>T</variation>
    <location>
        <position position="39"/>
    </location>
</feature>
<feature type="sequence conflict" description="In Ref. 1; AAC52728." evidence="8" ref="1">
    <original>M</original>
    <variation>V</variation>
    <location>
        <position position="226"/>
    </location>
</feature>
<feature type="sequence conflict" description="In Ref. 1; AAC52728." evidence="8" ref="1">
    <original>DSD</original>
    <variation>HSS</variation>
    <location>
        <begin position="237"/>
        <end position="239"/>
    </location>
</feature>
<feature type="sequence conflict" description="In Ref. 1; AAC52728." evidence="8" ref="1">
    <original>S</original>
    <variation>T</variation>
    <location>
        <position position="415"/>
    </location>
</feature>
<feature type="sequence conflict" description="In Ref. 1; AAC52728." evidence="8" ref="1">
    <original>T</original>
    <variation>N</variation>
    <location>
        <position position="517"/>
    </location>
</feature>
<feature type="sequence conflict" description="In Ref. 3; AAB40718." evidence="8" ref="3">
    <original>N</original>
    <variation>H</variation>
    <location>
        <position position="561"/>
    </location>
</feature>
<feature type="sequence conflict" description="In Ref. 3; AAB40718." evidence="8" ref="3">
    <original>S</original>
    <variation>T</variation>
    <location>
        <position position="804"/>
    </location>
</feature>
<feature type="sequence conflict" description="In Ref. 3; AAB40718." evidence="8" ref="3">
    <original>N</original>
    <variation>I</variation>
    <location>
        <position position="918"/>
    </location>
</feature>
<feature type="sequence conflict" description="In Ref. 3; AAB40718." evidence="8" ref="3">
    <original>G</original>
    <variation>A</variation>
    <location>
        <position position="1019"/>
    </location>
</feature>
<feature type="sequence conflict" description="In Ref. 3; AAB40718." evidence="8" ref="3">
    <original>VTITTME</original>
    <variation>ITTMD</variation>
    <location>
        <begin position="1092"/>
        <end position="1098"/>
    </location>
</feature>
<feature type="turn" evidence="9">
    <location>
        <begin position="515"/>
        <end position="517"/>
    </location>
</feature>
<feature type="strand" evidence="9">
    <location>
        <begin position="524"/>
        <end position="528"/>
    </location>
</feature>
<feature type="strand" evidence="9">
    <location>
        <begin position="534"/>
        <end position="539"/>
    </location>
</feature>
<feature type="strand" evidence="9">
    <location>
        <begin position="542"/>
        <end position="544"/>
    </location>
</feature>
<keyword id="KW-0002">3D-structure</keyword>
<keyword id="KW-0025">Alternative splicing</keyword>
<keyword id="KW-0158">Chromosome</keyword>
<keyword id="KW-0175">Coiled coil</keyword>
<keyword id="KW-0217">Developmental protein</keyword>
<keyword id="KW-0221">Differentiation</keyword>
<keyword id="KW-0238">DNA-binding</keyword>
<keyword id="KW-0479">Metal-binding</keyword>
<keyword id="KW-0524">Neurogenesis</keyword>
<keyword id="KW-0539">Nucleus</keyword>
<keyword id="KW-0597">Phosphoprotein</keyword>
<keyword id="KW-1185">Reference proteome</keyword>
<keyword id="KW-0677">Repeat</keyword>
<keyword id="KW-0678">Repressor</keyword>
<keyword id="KW-0804">Transcription</keyword>
<keyword id="KW-0805">Transcription regulation</keyword>
<keyword id="KW-0862">Zinc</keyword>
<keyword id="KW-0863">Zinc-finger</keyword>
<evidence type="ECO:0000250" key="1">
    <source>
        <dbReference type="UniProtKB" id="P97500"/>
    </source>
</evidence>
<evidence type="ECO:0000255" key="2"/>
<evidence type="ECO:0000255" key="3">
    <source>
        <dbReference type="PROSITE-ProRule" id="PRU01143"/>
    </source>
</evidence>
<evidence type="ECO:0000256" key="4">
    <source>
        <dbReference type="SAM" id="MobiDB-lite"/>
    </source>
</evidence>
<evidence type="ECO:0000269" key="5">
    <source>
    </source>
</evidence>
<evidence type="ECO:0000269" key="6">
    <source>
    </source>
</evidence>
<evidence type="ECO:0000303" key="7">
    <source>
    </source>
</evidence>
<evidence type="ECO:0000305" key="8"/>
<evidence type="ECO:0007829" key="9">
    <source>
        <dbReference type="PDB" id="1PXE"/>
    </source>
</evidence>
<protein>
    <recommendedName>
        <fullName>Myelin transcription factor 1-like protein</fullName>
        <shortName>MyT1-L</shortName>
        <shortName>MyT1L</shortName>
    </recommendedName>
    <alternativeName>
        <fullName evidence="7">Neural zinc finger factor 1</fullName>
        <shortName evidence="7">NZF-1</shortName>
    </alternativeName>
</protein>
<gene>
    <name type="primary">Myt1l</name>
    <name evidence="7" type="synonym">Nzf1</name>
</gene>